<organism>
    <name type="scientific">Rattus norvegicus</name>
    <name type="common">Rat</name>
    <dbReference type="NCBI Taxonomy" id="10116"/>
    <lineage>
        <taxon>Eukaryota</taxon>
        <taxon>Metazoa</taxon>
        <taxon>Chordata</taxon>
        <taxon>Craniata</taxon>
        <taxon>Vertebrata</taxon>
        <taxon>Euteleostomi</taxon>
        <taxon>Mammalia</taxon>
        <taxon>Eutheria</taxon>
        <taxon>Euarchontoglires</taxon>
        <taxon>Glires</taxon>
        <taxon>Rodentia</taxon>
        <taxon>Myomorpha</taxon>
        <taxon>Muroidea</taxon>
        <taxon>Muridae</taxon>
        <taxon>Murinae</taxon>
        <taxon>Rattus</taxon>
    </lineage>
</organism>
<protein>
    <recommendedName>
        <fullName evidence="3">Adenine phosphoribosyltransferase</fullName>
        <shortName>APRT</shortName>
        <ecNumber evidence="1">2.4.2.7</ecNumber>
    </recommendedName>
</protein>
<dbReference type="EC" id="2.4.2.7" evidence="1"/>
<dbReference type="EMBL" id="L04970">
    <property type="protein sequence ID" value="AAA40757.1"/>
    <property type="molecule type" value="Genomic_DNA"/>
</dbReference>
<dbReference type="RefSeq" id="NP_001013079.1">
    <property type="nucleotide sequence ID" value="NM_001013061.2"/>
</dbReference>
<dbReference type="SMR" id="P36972"/>
<dbReference type="BioGRID" id="253751">
    <property type="interactions" value="1"/>
</dbReference>
<dbReference type="FunCoup" id="P36972">
    <property type="interactions" value="1440"/>
</dbReference>
<dbReference type="IntAct" id="P36972">
    <property type="interactions" value="7"/>
</dbReference>
<dbReference type="MINT" id="P36972"/>
<dbReference type="STRING" id="10116.ENSRNOP00000061449"/>
<dbReference type="GlyGen" id="P36972">
    <property type="glycosylation" value="1 site"/>
</dbReference>
<dbReference type="iPTMnet" id="P36972"/>
<dbReference type="PhosphoSitePlus" id="P36972"/>
<dbReference type="SwissPalm" id="P36972"/>
<dbReference type="jPOST" id="P36972"/>
<dbReference type="PaxDb" id="10116-ENSRNOP00000061449"/>
<dbReference type="GeneID" id="292072"/>
<dbReference type="KEGG" id="rno:292072"/>
<dbReference type="UCSC" id="RGD:1307758">
    <property type="organism name" value="rat"/>
</dbReference>
<dbReference type="AGR" id="RGD:1307758"/>
<dbReference type="CTD" id="353"/>
<dbReference type="RGD" id="1307758">
    <property type="gene designation" value="Aprt"/>
</dbReference>
<dbReference type="VEuPathDB" id="HostDB:ENSRNOG00000014405"/>
<dbReference type="eggNOG" id="KOG1712">
    <property type="taxonomic scope" value="Eukaryota"/>
</dbReference>
<dbReference type="HOGENOM" id="CLU_063339_3_2_1"/>
<dbReference type="InParanoid" id="P36972"/>
<dbReference type="OrthoDB" id="24203at9989"/>
<dbReference type="Reactome" id="R-RNO-6798695">
    <property type="pathway name" value="Neutrophil degranulation"/>
</dbReference>
<dbReference type="Reactome" id="R-RNO-74217">
    <property type="pathway name" value="Purine salvage"/>
</dbReference>
<dbReference type="SABIO-RK" id="P36972"/>
<dbReference type="UniPathway" id="UPA00588">
    <property type="reaction ID" value="UER00646"/>
</dbReference>
<dbReference type="PRO" id="PR:P36972"/>
<dbReference type="Proteomes" id="UP000002494">
    <property type="component" value="Chromosome 19"/>
</dbReference>
<dbReference type="Bgee" id="ENSRNOG00000014405">
    <property type="expression patterns" value="Expressed in duodenum and 18 other cell types or tissues"/>
</dbReference>
<dbReference type="GO" id="GO:0005737">
    <property type="term" value="C:cytoplasm"/>
    <property type="evidence" value="ECO:0000318"/>
    <property type="project" value="GO_Central"/>
</dbReference>
<dbReference type="GO" id="GO:0005829">
    <property type="term" value="C:cytosol"/>
    <property type="evidence" value="ECO:0000266"/>
    <property type="project" value="RGD"/>
</dbReference>
<dbReference type="GO" id="GO:0002055">
    <property type="term" value="F:adenine binding"/>
    <property type="evidence" value="ECO:0000266"/>
    <property type="project" value="RGD"/>
</dbReference>
<dbReference type="GO" id="GO:0003999">
    <property type="term" value="F:adenine phosphoribosyltransferase activity"/>
    <property type="evidence" value="ECO:0000250"/>
    <property type="project" value="UniProtKB"/>
</dbReference>
<dbReference type="GO" id="GO:0016208">
    <property type="term" value="F:AMP binding"/>
    <property type="evidence" value="ECO:0000314"/>
    <property type="project" value="RGD"/>
</dbReference>
<dbReference type="GO" id="GO:0046083">
    <property type="term" value="P:adenine metabolic process"/>
    <property type="evidence" value="ECO:0000266"/>
    <property type="project" value="RGD"/>
</dbReference>
<dbReference type="GO" id="GO:0006168">
    <property type="term" value="P:adenine salvage"/>
    <property type="evidence" value="ECO:0000318"/>
    <property type="project" value="GO_Central"/>
</dbReference>
<dbReference type="GO" id="GO:0044209">
    <property type="term" value="P:AMP salvage"/>
    <property type="evidence" value="ECO:0000266"/>
    <property type="project" value="RGD"/>
</dbReference>
<dbReference type="GO" id="GO:0032869">
    <property type="term" value="P:cellular response to insulin stimulus"/>
    <property type="evidence" value="ECO:0000270"/>
    <property type="project" value="RGD"/>
</dbReference>
<dbReference type="GO" id="GO:0032263">
    <property type="term" value="P:GMP salvage"/>
    <property type="evidence" value="ECO:0000266"/>
    <property type="project" value="RGD"/>
</dbReference>
<dbReference type="GO" id="GO:0007625">
    <property type="term" value="P:grooming behavior"/>
    <property type="evidence" value="ECO:0000266"/>
    <property type="project" value="RGD"/>
</dbReference>
<dbReference type="GO" id="GO:0032264">
    <property type="term" value="P:IMP salvage"/>
    <property type="evidence" value="ECO:0000266"/>
    <property type="project" value="RGD"/>
</dbReference>
<dbReference type="GO" id="GO:0007595">
    <property type="term" value="P:lactation"/>
    <property type="evidence" value="ECO:0000314"/>
    <property type="project" value="RGD"/>
</dbReference>
<dbReference type="GO" id="GO:0006166">
    <property type="term" value="P:purine ribonucleoside salvage"/>
    <property type="evidence" value="ECO:0000266"/>
    <property type="project" value="RGD"/>
</dbReference>
<dbReference type="CDD" id="cd06223">
    <property type="entry name" value="PRTases_typeI"/>
    <property type="match status" value="1"/>
</dbReference>
<dbReference type="FunFam" id="3.40.50.2020:FF:000123">
    <property type="entry name" value="Adenine phosphoribosyltransferase"/>
    <property type="match status" value="1"/>
</dbReference>
<dbReference type="Gene3D" id="3.40.50.2020">
    <property type="match status" value="1"/>
</dbReference>
<dbReference type="HAMAP" id="MF_00004">
    <property type="entry name" value="Aden_phosphoribosyltr"/>
    <property type="match status" value="1"/>
</dbReference>
<dbReference type="InterPro" id="IPR005764">
    <property type="entry name" value="Ade_phspho_trans"/>
</dbReference>
<dbReference type="InterPro" id="IPR000836">
    <property type="entry name" value="PRibTrfase_dom"/>
</dbReference>
<dbReference type="InterPro" id="IPR029057">
    <property type="entry name" value="PRTase-like"/>
</dbReference>
<dbReference type="InterPro" id="IPR050054">
    <property type="entry name" value="UPRTase/APRTase"/>
</dbReference>
<dbReference type="NCBIfam" id="TIGR01090">
    <property type="entry name" value="apt"/>
    <property type="match status" value="1"/>
</dbReference>
<dbReference type="NCBIfam" id="NF002634">
    <property type="entry name" value="PRK02304.1-3"/>
    <property type="match status" value="1"/>
</dbReference>
<dbReference type="NCBIfam" id="NF002636">
    <property type="entry name" value="PRK02304.1-5"/>
    <property type="match status" value="1"/>
</dbReference>
<dbReference type="PANTHER" id="PTHR32315">
    <property type="entry name" value="ADENINE PHOSPHORIBOSYLTRANSFERASE"/>
    <property type="match status" value="1"/>
</dbReference>
<dbReference type="PANTHER" id="PTHR32315:SF3">
    <property type="entry name" value="ADENINE PHOSPHORIBOSYLTRANSFERASE"/>
    <property type="match status" value="1"/>
</dbReference>
<dbReference type="Pfam" id="PF00156">
    <property type="entry name" value="Pribosyltran"/>
    <property type="match status" value="1"/>
</dbReference>
<dbReference type="SUPFAM" id="SSF53271">
    <property type="entry name" value="PRTase-like"/>
    <property type="match status" value="1"/>
</dbReference>
<dbReference type="PROSITE" id="PS00103">
    <property type="entry name" value="PUR_PYR_PR_TRANSFER"/>
    <property type="match status" value="1"/>
</dbReference>
<accession>P36972</accession>
<evidence type="ECO:0000250" key="1">
    <source>
        <dbReference type="UniProtKB" id="P07741"/>
    </source>
</evidence>
<evidence type="ECO:0000269" key="2">
    <source ref="3"/>
</evidence>
<evidence type="ECO:0000305" key="3"/>
<evidence type="ECO:0000312" key="4">
    <source>
        <dbReference type="RGD" id="1307758"/>
    </source>
</evidence>
<evidence type="ECO:0007744" key="5">
    <source>
    </source>
</evidence>
<keyword id="KW-0007">Acetylation</keyword>
<keyword id="KW-0963">Cytoplasm</keyword>
<keyword id="KW-0903">Direct protein sequencing</keyword>
<keyword id="KW-0328">Glycosyltransferase</keyword>
<keyword id="KW-0597">Phosphoprotein</keyword>
<keyword id="KW-0660">Purine salvage</keyword>
<keyword id="KW-1185">Reference proteome</keyword>
<keyword id="KW-0808">Transferase</keyword>
<proteinExistence type="evidence at protein level"/>
<sequence>MSESELQLVARRIRSFPDFPIPGVLFRDISPLLKDPDSFRASIRLLAGHLKSTHGGKIDYIAGLDSRGFLFGPSLAQELGVGCVLIRKRGKLPGPTVSASYSLEYGKAELEIQKDALEPGQKVVIVDDLLATGGTMCAACELLSQLRAEVVECVSLVELTSLKGREKLGPVPFFSLLQYE</sequence>
<gene>
    <name evidence="4" type="primary">Aprt</name>
</gene>
<feature type="initiator methionine" description="Removed" evidence="2">
    <location>
        <position position="1"/>
    </location>
</feature>
<feature type="chain" id="PRO_0000149509" description="Adenine phosphoribosyltransferase">
    <location>
        <begin position="2"/>
        <end position="180"/>
    </location>
</feature>
<feature type="modified residue" description="N-acetylserine" evidence="2">
    <location>
        <position position="2"/>
    </location>
</feature>
<feature type="modified residue" description="Phosphoserine" evidence="1">
    <location>
        <position position="4"/>
    </location>
</feature>
<feature type="modified residue" description="Phosphoserine" evidence="5">
    <location>
        <position position="15"/>
    </location>
</feature>
<feature type="modified residue" description="Phosphoserine" evidence="5">
    <location>
        <position position="30"/>
    </location>
</feature>
<feature type="modified residue" description="Phosphotyrosine" evidence="1">
    <location>
        <position position="60"/>
    </location>
</feature>
<feature type="modified residue" description="Phosphoserine" evidence="5">
    <location>
        <position position="66"/>
    </location>
</feature>
<feature type="modified residue" description="N6-acetyllysine" evidence="1">
    <location>
        <position position="114"/>
    </location>
</feature>
<feature type="modified residue" description="Phosphothreonine" evidence="1">
    <location>
        <position position="135"/>
    </location>
</feature>
<reference key="1">
    <citation type="journal article" date="1993" name="Genome">
        <title>The rat adenine phosphoribosyltransferase sequence shows evolutionary rate variation among exons in rodents.</title>
        <authorList>
            <person name="Fieldhouse D."/>
            <person name="Golding G.B."/>
        </authorList>
    </citation>
    <scope>NUCLEOTIDE SEQUENCE [GENOMIC DNA]</scope>
</reference>
<reference key="2">
    <citation type="submission" date="2007-04" db="UniProtKB">
        <authorList>
            <person name="Lubec G."/>
            <person name="Afjehi-Sadat L."/>
            <person name="Diao W."/>
        </authorList>
    </citation>
    <scope>PROTEIN SEQUENCE OF 15-34; 58-87; 92-107 AND 123-163</scope>
    <scope>IDENTIFICATION BY MASS SPECTROMETRY</scope>
    <source>
        <strain>Sprague-Dawley</strain>
        <tissue>Hippocampus</tissue>
        <tissue>Spinal cord</tissue>
    </source>
</reference>
<reference key="3">
    <citation type="submission" date="2007-02" db="UniProtKB">
        <authorList>
            <person name="Lubec G."/>
            <person name="Chen W.-Q."/>
        </authorList>
    </citation>
    <scope>ACETYLATION AT SER-2</scope>
    <scope>IDENTIFICATION BY MASS SPECTROMETRY</scope>
</reference>
<reference key="4">
    <citation type="journal article" date="2012" name="Nat. Commun.">
        <title>Quantitative maps of protein phosphorylation sites across 14 different rat organs and tissues.</title>
        <authorList>
            <person name="Lundby A."/>
            <person name="Secher A."/>
            <person name="Lage K."/>
            <person name="Nordsborg N.B."/>
            <person name="Dmytriyev A."/>
            <person name="Lundby C."/>
            <person name="Olsen J.V."/>
        </authorList>
    </citation>
    <scope>PHOSPHORYLATION [LARGE SCALE ANALYSIS] AT SER-15; SER-30 AND SER-66</scope>
    <scope>IDENTIFICATION BY MASS SPECTROMETRY [LARGE SCALE ANALYSIS]</scope>
</reference>
<comment type="function">
    <text evidence="1">Catalyzes a salvage reaction resulting in the formation of AMP, that is energically less costly than de novo synthesis.</text>
</comment>
<comment type="catalytic activity">
    <reaction evidence="1">
        <text>AMP + diphosphate = 5-phospho-alpha-D-ribose 1-diphosphate + adenine</text>
        <dbReference type="Rhea" id="RHEA:16609"/>
        <dbReference type="ChEBI" id="CHEBI:16708"/>
        <dbReference type="ChEBI" id="CHEBI:33019"/>
        <dbReference type="ChEBI" id="CHEBI:58017"/>
        <dbReference type="ChEBI" id="CHEBI:456215"/>
        <dbReference type="EC" id="2.4.2.7"/>
    </reaction>
</comment>
<comment type="pathway">
    <text evidence="1">Purine metabolism; AMP biosynthesis via salvage pathway; AMP from adenine: step 1/1.</text>
</comment>
<comment type="subunit">
    <text>Homodimer.</text>
</comment>
<comment type="subcellular location">
    <subcellularLocation>
        <location>Cytoplasm</location>
    </subcellularLocation>
</comment>
<comment type="similarity">
    <text evidence="3">Belongs to the purine/pyrimidine phosphoribosyltransferase family.</text>
</comment>
<name>APT_RAT</name>